<proteinExistence type="inferred from homology"/>
<reference key="1">
    <citation type="journal article" date="1997" name="Biochem. Mol. Biol. Int.">
        <title>The large ribosomal protein gene cluster of a cryptomonad plastid: gene organization, sequence and evolutionary implications.</title>
        <authorList>
            <person name="Wang S.L."/>
            <person name="Liu X.-Q."/>
            <person name="Douglas S.E."/>
        </authorList>
    </citation>
    <scope>NUCLEOTIDE SEQUENCE [GENOMIC DNA]</scope>
</reference>
<reference key="2">
    <citation type="journal article" date="1999" name="J. Mol. Evol.">
        <title>The plastid genome of the cryptophyte alga, Guillardia theta: complete sequence and conserved synteny groups confirm its common ancestry with red algae.</title>
        <authorList>
            <person name="Douglas S.E."/>
            <person name="Penny S.L."/>
        </authorList>
    </citation>
    <scope>NUCLEOTIDE SEQUENCE [LARGE SCALE GENOMIC DNA]</scope>
</reference>
<keyword id="KW-0150">Chloroplast</keyword>
<keyword id="KW-0934">Plastid</keyword>
<keyword id="KW-0687">Ribonucleoprotein</keyword>
<keyword id="KW-0689">Ribosomal protein</keyword>
<keyword id="KW-0694">RNA-binding</keyword>
<keyword id="KW-0699">rRNA-binding</keyword>
<feature type="chain" id="PRO_0000123303" description="Small ribosomal subunit protein uS11c">
    <location>
        <begin position="1"/>
        <end position="130"/>
    </location>
</feature>
<sequence length="130" mass="13687">MVRQVKKSSLKKNKKVAANGVVHIQSTFNNTIVTLSTLEGDTVAWASSGAIGFKGAKKGTPFAAQIAAEKATKEAISQGMKKAEVLINGPGSGRETAIRALQAAGLEITLIRDITPVPHNGCRPPKKLRV</sequence>
<name>RR11_GUITH</name>
<gene>
    <name evidence="1" type="primary">rps11</name>
</gene>
<geneLocation type="chloroplast"/>
<accession>O46913</accession>
<comment type="subunit">
    <text evidence="1">Part of the 30S ribosomal subunit.</text>
</comment>
<comment type="subcellular location">
    <subcellularLocation>
        <location>Plastid</location>
        <location>Chloroplast</location>
    </subcellularLocation>
</comment>
<comment type="similarity">
    <text evidence="1">Belongs to the universal ribosomal protein uS11 family.</text>
</comment>
<protein>
    <recommendedName>
        <fullName evidence="1">Small ribosomal subunit protein uS11c</fullName>
    </recommendedName>
    <alternativeName>
        <fullName evidence="2">30S ribosomal protein S11, chloroplastic</fullName>
    </alternativeName>
</protein>
<dbReference type="EMBL" id="AF041468">
    <property type="protein sequence ID" value="AAC35723.1"/>
    <property type="molecule type" value="Genomic_DNA"/>
</dbReference>
<dbReference type="RefSeq" id="NP_050789.1">
    <property type="nucleotide sequence ID" value="NC_000926.1"/>
</dbReference>
<dbReference type="SMR" id="O46913"/>
<dbReference type="GeneID" id="857097"/>
<dbReference type="HOGENOM" id="CLU_072439_5_0_1"/>
<dbReference type="OMA" id="TAVDQGM"/>
<dbReference type="GO" id="GO:0009507">
    <property type="term" value="C:chloroplast"/>
    <property type="evidence" value="ECO:0007669"/>
    <property type="project" value="UniProtKB-SubCell"/>
</dbReference>
<dbReference type="GO" id="GO:1990904">
    <property type="term" value="C:ribonucleoprotein complex"/>
    <property type="evidence" value="ECO:0007669"/>
    <property type="project" value="UniProtKB-KW"/>
</dbReference>
<dbReference type="GO" id="GO:0005840">
    <property type="term" value="C:ribosome"/>
    <property type="evidence" value="ECO:0007669"/>
    <property type="project" value="UniProtKB-KW"/>
</dbReference>
<dbReference type="GO" id="GO:0019843">
    <property type="term" value="F:rRNA binding"/>
    <property type="evidence" value="ECO:0007669"/>
    <property type="project" value="UniProtKB-UniRule"/>
</dbReference>
<dbReference type="GO" id="GO:0003735">
    <property type="term" value="F:structural constituent of ribosome"/>
    <property type="evidence" value="ECO:0007669"/>
    <property type="project" value="InterPro"/>
</dbReference>
<dbReference type="GO" id="GO:0006412">
    <property type="term" value="P:translation"/>
    <property type="evidence" value="ECO:0007669"/>
    <property type="project" value="UniProtKB-UniRule"/>
</dbReference>
<dbReference type="FunFam" id="3.30.420.80:FF:000010">
    <property type="entry name" value="30S ribosomal protein S11"/>
    <property type="match status" value="1"/>
</dbReference>
<dbReference type="Gene3D" id="3.30.420.80">
    <property type="entry name" value="Ribosomal protein S11"/>
    <property type="match status" value="1"/>
</dbReference>
<dbReference type="HAMAP" id="MF_01310">
    <property type="entry name" value="Ribosomal_uS11"/>
    <property type="match status" value="1"/>
</dbReference>
<dbReference type="InterPro" id="IPR001971">
    <property type="entry name" value="Ribosomal_uS11"/>
</dbReference>
<dbReference type="InterPro" id="IPR019981">
    <property type="entry name" value="Ribosomal_uS11_bac-type"/>
</dbReference>
<dbReference type="InterPro" id="IPR018102">
    <property type="entry name" value="Ribosomal_uS11_CS"/>
</dbReference>
<dbReference type="InterPro" id="IPR036967">
    <property type="entry name" value="Ribosomal_uS11_sf"/>
</dbReference>
<dbReference type="NCBIfam" id="NF003698">
    <property type="entry name" value="PRK05309.1"/>
    <property type="match status" value="1"/>
</dbReference>
<dbReference type="NCBIfam" id="TIGR03632">
    <property type="entry name" value="uS11_bact"/>
    <property type="match status" value="1"/>
</dbReference>
<dbReference type="PANTHER" id="PTHR11759">
    <property type="entry name" value="40S RIBOSOMAL PROTEIN S14/30S RIBOSOMAL PROTEIN S11"/>
    <property type="match status" value="1"/>
</dbReference>
<dbReference type="Pfam" id="PF00411">
    <property type="entry name" value="Ribosomal_S11"/>
    <property type="match status" value="1"/>
</dbReference>
<dbReference type="PIRSF" id="PIRSF002131">
    <property type="entry name" value="Ribosomal_S11"/>
    <property type="match status" value="1"/>
</dbReference>
<dbReference type="SUPFAM" id="SSF53137">
    <property type="entry name" value="Translational machinery components"/>
    <property type="match status" value="1"/>
</dbReference>
<dbReference type="PROSITE" id="PS00054">
    <property type="entry name" value="RIBOSOMAL_S11"/>
    <property type="match status" value="1"/>
</dbReference>
<organism>
    <name type="scientific">Guillardia theta</name>
    <name type="common">Cryptophyte</name>
    <name type="synonym">Cryptomonas phi</name>
    <dbReference type="NCBI Taxonomy" id="55529"/>
    <lineage>
        <taxon>Eukaryota</taxon>
        <taxon>Cryptophyceae</taxon>
        <taxon>Pyrenomonadales</taxon>
        <taxon>Geminigeraceae</taxon>
        <taxon>Guillardia</taxon>
    </lineage>
</organism>
<evidence type="ECO:0000255" key="1">
    <source>
        <dbReference type="HAMAP-Rule" id="MF_01310"/>
    </source>
</evidence>
<evidence type="ECO:0000305" key="2"/>